<name>FDHE_SALTY</name>
<dbReference type="EMBL" id="AE006468">
    <property type="protein sequence ID" value="AAL22873.1"/>
    <property type="molecule type" value="Genomic_DNA"/>
</dbReference>
<dbReference type="RefSeq" id="NP_462914.1">
    <property type="nucleotide sequence ID" value="NC_003197.2"/>
</dbReference>
<dbReference type="RefSeq" id="WP_000027730.1">
    <property type="nucleotide sequence ID" value="NC_003197.2"/>
</dbReference>
<dbReference type="SMR" id="Q8ZKT0"/>
<dbReference type="STRING" id="99287.STM4034"/>
<dbReference type="PaxDb" id="99287-STM4034"/>
<dbReference type="GeneID" id="1255560"/>
<dbReference type="KEGG" id="stm:STM4034"/>
<dbReference type="PATRIC" id="fig|99287.12.peg.4250"/>
<dbReference type="HOGENOM" id="CLU_055275_0_0_6"/>
<dbReference type="OMA" id="PKNLYQR"/>
<dbReference type="PhylomeDB" id="Q8ZKT0"/>
<dbReference type="BioCyc" id="SENT99287:STM4034-MONOMER"/>
<dbReference type="Proteomes" id="UP000001014">
    <property type="component" value="Chromosome"/>
</dbReference>
<dbReference type="GO" id="GO:0005829">
    <property type="term" value="C:cytosol"/>
    <property type="evidence" value="ECO:0000318"/>
    <property type="project" value="GO_Central"/>
</dbReference>
<dbReference type="GO" id="GO:0008199">
    <property type="term" value="F:ferric iron binding"/>
    <property type="evidence" value="ECO:0000318"/>
    <property type="project" value="GO_Central"/>
</dbReference>
<dbReference type="GO" id="GO:0051604">
    <property type="term" value="P:protein maturation"/>
    <property type="evidence" value="ECO:0000318"/>
    <property type="project" value="GO_Central"/>
</dbReference>
<dbReference type="CDD" id="cd16341">
    <property type="entry name" value="FdhE"/>
    <property type="match status" value="1"/>
</dbReference>
<dbReference type="FunFam" id="3.90.1670.10:FF:000001">
    <property type="entry name" value="Protein FdhE"/>
    <property type="match status" value="1"/>
</dbReference>
<dbReference type="Gene3D" id="3.90.1670.10">
    <property type="entry name" value="FdhE-like domain"/>
    <property type="match status" value="1"/>
</dbReference>
<dbReference type="HAMAP" id="MF_00611">
    <property type="entry name" value="FdeH"/>
    <property type="match status" value="1"/>
</dbReference>
<dbReference type="InterPro" id="IPR024064">
    <property type="entry name" value="FdhE-like_sf"/>
</dbReference>
<dbReference type="InterPro" id="IPR056796">
    <property type="entry name" value="FdhE_C"/>
</dbReference>
<dbReference type="InterPro" id="IPR056797">
    <property type="entry name" value="FdhE_central"/>
</dbReference>
<dbReference type="InterPro" id="IPR056774">
    <property type="entry name" value="FdhE_N"/>
</dbReference>
<dbReference type="InterPro" id="IPR006452">
    <property type="entry name" value="Formate_DH_accessory"/>
</dbReference>
<dbReference type="NCBIfam" id="TIGR01562">
    <property type="entry name" value="FdhE"/>
    <property type="match status" value="1"/>
</dbReference>
<dbReference type="NCBIfam" id="NF002925">
    <property type="entry name" value="PRK03564.1"/>
    <property type="match status" value="1"/>
</dbReference>
<dbReference type="PANTHER" id="PTHR37689">
    <property type="entry name" value="PROTEIN FDHE"/>
    <property type="match status" value="1"/>
</dbReference>
<dbReference type="PANTHER" id="PTHR37689:SF1">
    <property type="entry name" value="PROTEIN FDHE"/>
    <property type="match status" value="1"/>
</dbReference>
<dbReference type="Pfam" id="PF24860">
    <property type="entry name" value="FdhE_C"/>
    <property type="match status" value="1"/>
</dbReference>
<dbReference type="Pfam" id="PF24859">
    <property type="entry name" value="FdhE_central"/>
    <property type="match status" value="1"/>
</dbReference>
<dbReference type="Pfam" id="PF04216">
    <property type="entry name" value="FdhE_N"/>
    <property type="match status" value="1"/>
</dbReference>
<dbReference type="PIRSF" id="PIRSF018296">
    <property type="entry name" value="Format_dh_formtn"/>
    <property type="match status" value="1"/>
</dbReference>
<dbReference type="SUPFAM" id="SSF144020">
    <property type="entry name" value="FdhE-like"/>
    <property type="match status" value="1"/>
</dbReference>
<gene>
    <name evidence="1" type="primary">fdhE</name>
    <name type="ordered locus">STM4034</name>
</gene>
<evidence type="ECO:0000255" key="1">
    <source>
        <dbReference type="HAMAP-Rule" id="MF_00611"/>
    </source>
</evidence>
<feature type="chain" id="PRO_0000189649" description="Protein FdhE">
    <location>
        <begin position="1"/>
        <end position="309"/>
    </location>
</feature>
<accession>Q8ZKT0</accession>
<proteinExistence type="inferred from homology"/>
<reference key="1">
    <citation type="journal article" date="2001" name="Nature">
        <title>Complete genome sequence of Salmonella enterica serovar Typhimurium LT2.</title>
        <authorList>
            <person name="McClelland M."/>
            <person name="Sanderson K.E."/>
            <person name="Spieth J."/>
            <person name="Clifton S.W."/>
            <person name="Latreille P."/>
            <person name="Courtney L."/>
            <person name="Porwollik S."/>
            <person name="Ali J."/>
            <person name="Dante M."/>
            <person name="Du F."/>
            <person name="Hou S."/>
            <person name="Layman D."/>
            <person name="Leonard S."/>
            <person name="Nguyen C."/>
            <person name="Scott K."/>
            <person name="Holmes A."/>
            <person name="Grewal N."/>
            <person name="Mulvaney E."/>
            <person name="Ryan E."/>
            <person name="Sun H."/>
            <person name="Florea L."/>
            <person name="Miller W."/>
            <person name="Stoneking T."/>
            <person name="Nhan M."/>
            <person name="Waterston R."/>
            <person name="Wilson R.K."/>
        </authorList>
    </citation>
    <scope>NUCLEOTIDE SEQUENCE [LARGE SCALE GENOMIC DNA]</scope>
    <source>
        <strain>LT2 / SGSC1412 / ATCC 700720</strain>
    </source>
</reference>
<keyword id="KW-0963">Cytoplasm</keyword>
<keyword id="KW-1185">Reference proteome</keyword>
<sequence length="309" mass="34706">MSIRIIPQDELGSSEKRTADMIPPLLFPRLKNVYNRRAERLRELAENNPLGDYLRFAALIAHAQEVVLYDHPLEMDLTARIKEANDQGKPPLDIHVLPRDKHWQKLLHSLIAELKPEMSGPALAVIENLEKASEQELEQMASALFASDFASVSSDKAPFIWAALSLYWAQMASLIPGKARAEYGEARQYCPVCGSMPVSSMVQIGTTQGLRYLHCNLCETEWHVVRVKCSNCEQSRDLHYWSLENEQAAVKAESCGDCGTYLKILYQEKDPKVEAVADDLASLVLDARMEQEGFARSSINPFLFPGEGE</sequence>
<protein>
    <recommendedName>
        <fullName evidence="1">Protein FdhE</fullName>
    </recommendedName>
</protein>
<comment type="function">
    <text evidence="1">Necessary for formate dehydrogenase activity.</text>
</comment>
<comment type="subcellular location">
    <subcellularLocation>
        <location evidence="1">Cytoplasm</location>
    </subcellularLocation>
</comment>
<comment type="similarity">
    <text evidence="1">Belongs to the FdhE family.</text>
</comment>
<organism>
    <name type="scientific">Salmonella typhimurium (strain LT2 / SGSC1412 / ATCC 700720)</name>
    <dbReference type="NCBI Taxonomy" id="99287"/>
    <lineage>
        <taxon>Bacteria</taxon>
        <taxon>Pseudomonadati</taxon>
        <taxon>Pseudomonadota</taxon>
        <taxon>Gammaproteobacteria</taxon>
        <taxon>Enterobacterales</taxon>
        <taxon>Enterobacteriaceae</taxon>
        <taxon>Salmonella</taxon>
    </lineage>
</organism>